<evidence type="ECO:0000250" key="1"/>
<evidence type="ECO:0000250" key="2">
    <source>
        <dbReference type="UniProtKB" id="Q8C739"/>
    </source>
</evidence>
<evidence type="ECO:0000250" key="3">
    <source>
        <dbReference type="UniProtKB" id="Q8TC76"/>
    </source>
</evidence>
<evidence type="ECO:0000256" key="4">
    <source>
        <dbReference type="SAM" id="MobiDB-lite"/>
    </source>
</evidence>
<evidence type="ECO:0000305" key="5"/>
<name>F110B_BOVIN</name>
<sequence>MPTESLQTGSMVKPVSPAGTFTSAVPLRILNKGPDYFRRQAEPNPKRLSAVERLEADKAKYVKSQEVINAKQEPVKPAVLAKPPVCPAAKRALGSPTLKGFGGGGGGAKSEGGAPRETLKLEILKNILNSSEGSSTGSGHKHSARNWPAPRADAAELHRHSFAESLRARPAPGRGSPQEGGSHVGRRPPEPTSSAAAAADAFLHVSHSSSDIRQGPGARPLKAILPCSSSAPPLPPKPKVAAPAAVKSPEAEAAEPAGGVGRRPSLQRSKSDLSDRYFRVDADVERFFNYCGLDPEELENLGMENFARANSDIISLNFRSASMISSDCEQSQDSNSDLRNDDSANDRVPYGISAIERNARIIKWLYSIKQARESQKVSHV</sequence>
<accession>Q2KJ38</accession>
<protein>
    <recommendedName>
        <fullName>Protein FAM110B</fullName>
    </recommendedName>
</protein>
<proteinExistence type="evidence at transcript level"/>
<feature type="chain" id="PRO_0000285650" description="Protein FAM110B">
    <location>
        <begin position="1"/>
        <end position="380"/>
    </location>
</feature>
<feature type="region of interest" description="Disordered" evidence="4">
    <location>
        <begin position="92"/>
        <end position="272"/>
    </location>
</feature>
<feature type="region of interest" description="Disordered" evidence="4">
    <location>
        <begin position="327"/>
        <end position="347"/>
    </location>
</feature>
<feature type="compositionally biased region" description="Gly residues" evidence="4">
    <location>
        <begin position="100"/>
        <end position="110"/>
    </location>
</feature>
<feature type="compositionally biased region" description="Polar residues" evidence="4">
    <location>
        <begin position="127"/>
        <end position="138"/>
    </location>
</feature>
<feature type="compositionally biased region" description="Basic and acidic residues" evidence="4">
    <location>
        <begin position="153"/>
        <end position="162"/>
    </location>
</feature>
<feature type="compositionally biased region" description="Low complexity" evidence="4">
    <location>
        <begin position="239"/>
        <end position="248"/>
    </location>
</feature>
<feature type="compositionally biased region" description="Basic and acidic residues" evidence="4">
    <location>
        <begin position="336"/>
        <end position="345"/>
    </location>
</feature>
<feature type="modified residue" description="Phosphoserine" evidence="2">
    <location>
        <position position="248"/>
    </location>
</feature>
<feature type="modified residue" description="Phosphoserine" evidence="3">
    <location>
        <position position="311"/>
    </location>
</feature>
<gene>
    <name type="primary">FAM110B</name>
</gene>
<comment type="subcellular location">
    <subcellularLocation>
        <location>Cytoplasm</location>
    </subcellularLocation>
    <subcellularLocation>
        <location evidence="1">Cytoplasm</location>
        <location evidence="1">Cytoskeleton</location>
        <location evidence="1">Microtubule organizing center</location>
        <location evidence="1">Centrosome</location>
    </subcellularLocation>
</comment>
<comment type="similarity">
    <text evidence="5">Belongs to the FAM110 family.</text>
</comment>
<keyword id="KW-0963">Cytoplasm</keyword>
<keyword id="KW-0206">Cytoskeleton</keyword>
<keyword id="KW-0597">Phosphoprotein</keyword>
<keyword id="KW-1185">Reference proteome</keyword>
<reference key="1">
    <citation type="submission" date="2005-09" db="EMBL/GenBank/DDBJ databases">
        <authorList>
            <consortium name="NIH - Mammalian Gene Collection (MGC) project"/>
        </authorList>
    </citation>
    <scope>NUCLEOTIDE SEQUENCE [LARGE SCALE MRNA]</scope>
    <source>
        <strain>Hereford</strain>
        <tissue>Uterus</tissue>
    </source>
</reference>
<organism>
    <name type="scientific">Bos taurus</name>
    <name type="common">Bovine</name>
    <dbReference type="NCBI Taxonomy" id="9913"/>
    <lineage>
        <taxon>Eukaryota</taxon>
        <taxon>Metazoa</taxon>
        <taxon>Chordata</taxon>
        <taxon>Craniata</taxon>
        <taxon>Vertebrata</taxon>
        <taxon>Euteleostomi</taxon>
        <taxon>Mammalia</taxon>
        <taxon>Eutheria</taxon>
        <taxon>Laurasiatheria</taxon>
        <taxon>Artiodactyla</taxon>
        <taxon>Ruminantia</taxon>
        <taxon>Pecora</taxon>
        <taxon>Bovidae</taxon>
        <taxon>Bovinae</taxon>
        <taxon>Bos</taxon>
    </lineage>
</organism>
<dbReference type="EMBL" id="BC105536">
    <property type="protein sequence ID" value="AAI05537.1"/>
    <property type="molecule type" value="mRNA"/>
</dbReference>
<dbReference type="RefSeq" id="NP_001070486.1">
    <property type="nucleotide sequence ID" value="NM_001077018.1"/>
</dbReference>
<dbReference type="RefSeq" id="XP_024857545.1">
    <property type="nucleotide sequence ID" value="XM_025001777.2"/>
</dbReference>
<dbReference type="RefSeq" id="XP_024857546.1">
    <property type="nucleotide sequence ID" value="XM_025001778.2"/>
</dbReference>
<dbReference type="FunCoup" id="Q2KJ38">
    <property type="interactions" value="1563"/>
</dbReference>
<dbReference type="STRING" id="9913.ENSBTAP00000071055"/>
<dbReference type="Ensembl" id="ENSBTAT00000093577.1">
    <property type="protein sequence ID" value="ENSBTAP00000103629.1"/>
    <property type="gene ID" value="ENSBTAG00000050550.2"/>
</dbReference>
<dbReference type="Ensembl" id="ENSBTAT00000093822.1">
    <property type="protein sequence ID" value="ENSBTAP00000095520.1"/>
    <property type="gene ID" value="ENSBTAG00000050550.2"/>
</dbReference>
<dbReference type="Ensembl" id="ENSBTAT00000103479.1">
    <property type="protein sequence ID" value="ENSBTAP00000087343.1"/>
    <property type="gene ID" value="ENSBTAG00000050550.2"/>
</dbReference>
<dbReference type="Ensembl" id="ENSBTAT00000105200.1">
    <property type="protein sequence ID" value="ENSBTAP00000093712.1"/>
    <property type="gene ID" value="ENSBTAG00000050550.2"/>
</dbReference>
<dbReference type="Ensembl" id="ENSBTAT00000119913.1">
    <property type="protein sequence ID" value="ENSBTAP00000088281.1"/>
    <property type="gene ID" value="ENSBTAG00000050550.2"/>
</dbReference>
<dbReference type="Ensembl" id="ENSBTAT00000123529.1">
    <property type="protein sequence ID" value="ENSBTAP00000092493.1"/>
    <property type="gene ID" value="ENSBTAG00000050550.2"/>
</dbReference>
<dbReference type="Ensembl" id="ENSBTAT00000126941.1">
    <property type="protein sequence ID" value="ENSBTAP00000096006.1"/>
    <property type="gene ID" value="ENSBTAG00000050550.2"/>
</dbReference>
<dbReference type="Ensembl" id="ENSBTAT00000132310.1">
    <property type="protein sequence ID" value="ENSBTAP00000088630.1"/>
    <property type="gene ID" value="ENSBTAG00000050550.2"/>
</dbReference>
<dbReference type="GeneID" id="767946"/>
<dbReference type="KEGG" id="bta:767946"/>
<dbReference type="CTD" id="90362"/>
<dbReference type="VEuPathDB" id="HostDB:ENSBTAG00000050550"/>
<dbReference type="VGNC" id="VGNC:28717">
    <property type="gene designation" value="FAM110B"/>
</dbReference>
<dbReference type="GeneTree" id="ENSGT00950000183056"/>
<dbReference type="InParanoid" id="Q2KJ38"/>
<dbReference type="OMA" id="IASMKSP"/>
<dbReference type="OrthoDB" id="10028183at2759"/>
<dbReference type="Proteomes" id="UP000009136">
    <property type="component" value="Chromosome 14"/>
</dbReference>
<dbReference type="Bgee" id="ENSBTAG00000050550">
    <property type="expression patterns" value="Expressed in diaphragm and 101 other cell types or tissues"/>
</dbReference>
<dbReference type="GO" id="GO:0005813">
    <property type="term" value="C:centrosome"/>
    <property type="evidence" value="ECO:0007669"/>
    <property type="project" value="UniProtKB-SubCell"/>
</dbReference>
<dbReference type="GO" id="GO:0005737">
    <property type="term" value="C:cytoplasm"/>
    <property type="evidence" value="ECO:0007669"/>
    <property type="project" value="UniProtKB-SubCell"/>
</dbReference>
<dbReference type="InterPro" id="IPR025740">
    <property type="entry name" value="FAM110"/>
</dbReference>
<dbReference type="InterPro" id="IPR025741">
    <property type="entry name" value="FAM110_C"/>
</dbReference>
<dbReference type="InterPro" id="IPR025739">
    <property type="entry name" value="FAM110_N"/>
</dbReference>
<dbReference type="PANTHER" id="PTHR14758">
    <property type="entry name" value="AGAP005440-PA"/>
    <property type="match status" value="1"/>
</dbReference>
<dbReference type="PANTHER" id="PTHR14758:SF2">
    <property type="entry name" value="PROTEIN FAM110B"/>
    <property type="match status" value="1"/>
</dbReference>
<dbReference type="Pfam" id="PF14160">
    <property type="entry name" value="FAM110_C"/>
    <property type="match status" value="1"/>
</dbReference>
<dbReference type="Pfam" id="PF14161">
    <property type="entry name" value="FAM110_N"/>
    <property type="match status" value="1"/>
</dbReference>